<evidence type="ECO:0000255" key="1">
    <source>
        <dbReference type="HAMAP-Rule" id="MF_00014"/>
    </source>
</evidence>
<evidence type="ECO:0007829" key="2">
    <source>
        <dbReference type="PDB" id="3H9N"/>
    </source>
</evidence>
<sequence>MKNMEQQHIEVVGKLGSTYGIRGWLRIYSSTEQAESIFDYQPWFLKIKGEWQSIELENWRYHNHEIIVKLKGVDDREAAQILANVEIGVDLSVFPELEEGDYYWHDLIGCTVVNLEGYTMGTVTEMMETGSNDVLVVKANTKDAFGKQERLIPFLYEQVVKRVDLTTKTIEVDWDAGF</sequence>
<organism>
    <name type="scientific">Haemophilus influenzae (strain ATCC 51907 / DSM 11121 / KW20 / Rd)</name>
    <dbReference type="NCBI Taxonomy" id="71421"/>
    <lineage>
        <taxon>Bacteria</taxon>
        <taxon>Pseudomonadati</taxon>
        <taxon>Pseudomonadota</taxon>
        <taxon>Gammaproteobacteria</taxon>
        <taxon>Pasteurellales</taxon>
        <taxon>Pasteurellaceae</taxon>
        <taxon>Haemophilus</taxon>
    </lineage>
</organism>
<name>RIMM_HAEIN</name>
<feature type="chain" id="PRO_0000163297" description="Ribosome maturation factor RimM">
    <location>
        <begin position="1"/>
        <end position="178"/>
    </location>
</feature>
<feature type="domain" description="PRC barrel" evidence="1">
    <location>
        <begin position="99"/>
        <end position="178"/>
    </location>
</feature>
<feature type="strand" evidence="2">
    <location>
        <begin position="9"/>
        <end position="18"/>
    </location>
</feature>
<feature type="strand" evidence="2">
    <location>
        <begin position="20"/>
        <end position="23"/>
    </location>
</feature>
<feature type="strand" evidence="2">
    <location>
        <begin position="25"/>
        <end position="29"/>
    </location>
</feature>
<feature type="strand" evidence="2">
    <location>
        <begin position="31"/>
        <end position="34"/>
    </location>
</feature>
<feature type="helix" evidence="2">
    <location>
        <begin position="35"/>
        <end position="39"/>
    </location>
</feature>
<feature type="strand" evidence="2">
    <location>
        <begin position="42"/>
        <end position="47"/>
    </location>
</feature>
<feature type="strand" evidence="2">
    <location>
        <begin position="50"/>
        <end position="54"/>
    </location>
</feature>
<feature type="strand" evidence="2">
    <location>
        <begin position="56"/>
        <end position="64"/>
    </location>
</feature>
<feature type="strand" evidence="2">
    <location>
        <begin position="66"/>
        <end position="72"/>
    </location>
</feature>
<feature type="helix" evidence="2">
    <location>
        <begin position="76"/>
        <end position="80"/>
    </location>
</feature>
<feature type="turn" evidence="2">
    <location>
        <begin position="81"/>
        <end position="84"/>
    </location>
</feature>
<feature type="strand" evidence="2">
    <location>
        <begin position="86"/>
        <end position="90"/>
    </location>
</feature>
<feature type="strand" evidence="2">
    <location>
        <begin position="98"/>
        <end position="100"/>
    </location>
</feature>
<feature type="helix" evidence="2">
    <location>
        <begin position="102"/>
        <end position="106"/>
    </location>
</feature>
<feature type="turn" evidence="2">
    <location>
        <begin position="107"/>
        <end position="109"/>
    </location>
</feature>
<feature type="strand" evidence="2">
    <location>
        <begin position="111"/>
        <end position="114"/>
    </location>
</feature>
<feature type="strand" evidence="2">
    <location>
        <begin position="119"/>
        <end position="131"/>
    </location>
</feature>
<feature type="strand" evidence="2">
    <location>
        <begin position="133"/>
        <end position="138"/>
    </location>
</feature>
<feature type="strand" evidence="2">
    <location>
        <begin position="148"/>
        <end position="153"/>
    </location>
</feature>
<feature type="turn" evidence="2">
    <location>
        <begin position="157"/>
        <end position="159"/>
    </location>
</feature>
<feature type="strand" evidence="2">
    <location>
        <begin position="160"/>
        <end position="164"/>
    </location>
</feature>
<feature type="helix" evidence="2">
    <location>
        <begin position="165"/>
        <end position="167"/>
    </location>
</feature>
<feature type="strand" evidence="2">
    <location>
        <begin position="169"/>
        <end position="172"/>
    </location>
</feature>
<reference key="1">
    <citation type="journal article" date="1995" name="Science">
        <title>Whole-genome random sequencing and assembly of Haemophilus influenzae Rd.</title>
        <authorList>
            <person name="Fleischmann R.D."/>
            <person name="Adams M.D."/>
            <person name="White O."/>
            <person name="Clayton R.A."/>
            <person name="Kirkness E.F."/>
            <person name="Kerlavage A.R."/>
            <person name="Bult C.J."/>
            <person name="Tomb J.-F."/>
            <person name="Dougherty B.A."/>
            <person name="Merrick J.M."/>
            <person name="McKenney K."/>
            <person name="Sutton G.G."/>
            <person name="FitzHugh W."/>
            <person name="Fields C.A."/>
            <person name="Gocayne J.D."/>
            <person name="Scott J.D."/>
            <person name="Shirley R."/>
            <person name="Liu L.-I."/>
            <person name="Glodek A."/>
            <person name="Kelley J.M."/>
            <person name="Weidman J.F."/>
            <person name="Phillips C.A."/>
            <person name="Spriggs T."/>
            <person name="Hedblom E."/>
            <person name="Cotton M.D."/>
            <person name="Utterback T.R."/>
            <person name="Hanna M.C."/>
            <person name="Nguyen D.T."/>
            <person name="Saudek D.M."/>
            <person name="Brandon R.C."/>
            <person name="Fine L.D."/>
            <person name="Fritchman J.L."/>
            <person name="Fuhrmann J.L."/>
            <person name="Geoghagen N.S.M."/>
            <person name="Gnehm C.L."/>
            <person name="McDonald L.A."/>
            <person name="Small K.V."/>
            <person name="Fraser C.M."/>
            <person name="Smith H.O."/>
            <person name="Venter J.C."/>
        </authorList>
    </citation>
    <scope>NUCLEOTIDE SEQUENCE [LARGE SCALE GENOMIC DNA]</scope>
    <source>
        <strain>ATCC 51907 / DSM 11121 / KW20 / Rd</strain>
    </source>
</reference>
<accession>P44568</accession>
<dbReference type="EMBL" id="L42023">
    <property type="protein sequence ID" value="AAC21872.1"/>
    <property type="molecule type" value="Genomic_DNA"/>
</dbReference>
<dbReference type="PIR" id="D64145">
    <property type="entry name" value="D64145"/>
</dbReference>
<dbReference type="RefSeq" id="NP_438372.2">
    <property type="nucleotide sequence ID" value="NC_000907.1"/>
</dbReference>
<dbReference type="PDB" id="3H9N">
    <property type="method" value="X-ray"/>
    <property type="resolution" value="2.70 A"/>
    <property type="chains" value="A=8-178"/>
</dbReference>
<dbReference type="PDBsum" id="3H9N"/>
<dbReference type="SMR" id="P44568"/>
<dbReference type="STRING" id="71421.HI_0203"/>
<dbReference type="EnsemblBacteria" id="AAC21872">
    <property type="protein sequence ID" value="AAC21872"/>
    <property type="gene ID" value="HI_0203"/>
</dbReference>
<dbReference type="KEGG" id="hin:HI_0203"/>
<dbReference type="PATRIC" id="fig|71421.8.peg.208"/>
<dbReference type="eggNOG" id="COG0806">
    <property type="taxonomic scope" value="Bacteria"/>
</dbReference>
<dbReference type="HOGENOM" id="CLU_077636_1_0_6"/>
<dbReference type="OrthoDB" id="9783509at2"/>
<dbReference type="PhylomeDB" id="P44568"/>
<dbReference type="EvolutionaryTrace" id="P44568"/>
<dbReference type="Proteomes" id="UP000000579">
    <property type="component" value="Chromosome"/>
</dbReference>
<dbReference type="GO" id="GO:0005829">
    <property type="term" value="C:cytosol"/>
    <property type="evidence" value="ECO:0000318"/>
    <property type="project" value="GO_Central"/>
</dbReference>
<dbReference type="GO" id="GO:0005840">
    <property type="term" value="C:ribosome"/>
    <property type="evidence" value="ECO:0007669"/>
    <property type="project" value="InterPro"/>
</dbReference>
<dbReference type="GO" id="GO:0043022">
    <property type="term" value="F:ribosome binding"/>
    <property type="evidence" value="ECO:0007669"/>
    <property type="project" value="InterPro"/>
</dbReference>
<dbReference type="GO" id="GO:0030490">
    <property type="term" value="P:maturation of SSU-rRNA"/>
    <property type="evidence" value="ECO:0000318"/>
    <property type="project" value="GO_Central"/>
</dbReference>
<dbReference type="Gene3D" id="2.30.30.240">
    <property type="entry name" value="PRC-barrel domain"/>
    <property type="match status" value="1"/>
</dbReference>
<dbReference type="Gene3D" id="2.40.30.60">
    <property type="entry name" value="RimM"/>
    <property type="match status" value="1"/>
</dbReference>
<dbReference type="HAMAP" id="MF_00014">
    <property type="entry name" value="Ribosome_mat_RimM"/>
    <property type="match status" value="1"/>
</dbReference>
<dbReference type="InterPro" id="IPR011033">
    <property type="entry name" value="PRC_barrel-like_sf"/>
</dbReference>
<dbReference type="InterPro" id="IPR056792">
    <property type="entry name" value="PRC_RimM"/>
</dbReference>
<dbReference type="InterPro" id="IPR011961">
    <property type="entry name" value="RimM"/>
</dbReference>
<dbReference type="InterPro" id="IPR002676">
    <property type="entry name" value="RimM_N"/>
</dbReference>
<dbReference type="InterPro" id="IPR036976">
    <property type="entry name" value="RimM_N_sf"/>
</dbReference>
<dbReference type="InterPro" id="IPR009000">
    <property type="entry name" value="Transl_B-barrel_sf"/>
</dbReference>
<dbReference type="NCBIfam" id="TIGR02273">
    <property type="entry name" value="16S_RimM"/>
    <property type="match status" value="1"/>
</dbReference>
<dbReference type="PANTHER" id="PTHR33692">
    <property type="entry name" value="RIBOSOME MATURATION FACTOR RIMM"/>
    <property type="match status" value="1"/>
</dbReference>
<dbReference type="PANTHER" id="PTHR33692:SF1">
    <property type="entry name" value="RIBOSOME MATURATION FACTOR RIMM"/>
    <property type="match status" value="1"/>
</dbReference>
<dbReference type="Pfam" id="PF24986">
    <property type="entry name" value="PRC_RimM"/>
    <property type="match status" value="1"/>
</dbReference>
<dbReference type="Pfam" id="PF01782">
    <property type="entry name" value="RimM"/>
    <property type="match status" value="1"/>
</dbReference>
<dbReference type="SUPFAM" id="SSF50346">
    <property type="entry name" value="PRC-barrel domain"/>
    <property type="match status" value="1"/>
</dbReference>
<dbReference type="SUPFAM" id="SSF50447">
    <property type="entry name" value="Translation proteins"/>
    <property type="match status" value="1"/>
</dbReference>
<gene>
    <name evidence="1" type="primary">rimM</name>
    <name type="ordered locus">HI_0203</name>
</gene>
<proteinExistence type="evidence at protein level"/>
<protein>
    <recommendedName>
        <fullName evidence="1">Ribosome maturation factor RimM</fullName>
    </recommendedName>
</protein>
<keyword id="KW-0002">3D-structure</keyword>
<keyword id="KW-0143">Chaperone</keyword>
<keyword id="KW-0963">Cytoplasm</keyword>
<keyword id="KW-1185">Reference proteome</keyword>
<keyword id="KW-0690">Ribosome biogenesis</keyword>
<keyword id="KW-0698">rRNA processing</keyword>
<comment type="function">
    <text evidence="1">An accessory protein needed during the final step in the assembly of 30S ribosomal subunit, possibly for assembly of the head region. Essential for efficient processing of 16S rRNA. May be needed both before and after RbfA during the maturation of 16S rRNA. It has affinity for free ribosomal 30S subunits but not for 70S ribosomes.</text>
</comment>
<comment type="subunit">
    <text evidence="1">Binds ribosomal protein uS19.</text>
</comment>
<comment type="subcellular location">
    <subcellularLocation>
        <location evidence="1">Cytoplasm</location>
    </subcellularLocation>
</comment>
<comment type="domain">
    <text evidence="1">The PRC barrel domain binds ribosomal protein uS19.</text>
</comment>
<comment type="similarity">
    <text evidence="1">Belongs to the RimM family.</text>
</comment>